<protein>
    <recommendedName>
        <fullName evidence="1">Periplasmic nitrate reductase</fullName>
        <ecNumber evidence="1">1.9.6.1</ecNumber>
    </recommendedName>
</protein>
<sequence length="828" mass="93056">MKLSRRSFMKANAVAAAAAAAGLSVPGVARAVVGQQEAIKWDKAPCRFCGTGCGVLVGTQQGRVVACQGDPDAPVNRGLNCIKGYFLPKIMYGKDRLTQPLLRMKNGKYDKEGEFTPITWDQAFDVMEEKFKTALKEKGPESIGMFGSGQWTIWEGYAASKLFKAGFRSNNIDPNARHCMASAVVGFMRTFGMDEPMGCYDDIEQADAFVLWGANMAEMHPILWSRITNRRLSNQNVTVAVLSTYQHRSFELADNGIIFTPQSDLVILNYIANYIIQNNAINQDFFSKHVNLRKGATDIGYGLRPTHPLEKAAKNPGSDASEPMSFEDYKAFVAEYTLEKTAEMTGVPKDQLEQLAQLYADPNKKVISYWTMGFNQHTRGVWANNLVYNLHLLTGKISQPGCGPFSLTGQPSACGTAREVGTFAHRLPADMVVTNEKHRDICEKKWNIPSGTIPAKIGLHAVAQDRALKDGKLNVYWTMCTNNMQAGPNINEERMPGWRDPRNFIIVSDPYPTVSALAADLILPTAMWVEKEGAYGNAERRTQFWRQQVQAPGEAKSDLWQLVQFSRRFKTEEVWPEELLAKKPELRGKTLYEVLYATPEVSKFPVSELAEDQLNDESRELGFYLQKGLFEEYAWFGRGHGHDLAPFDDYHKARGLRWPVVNGKETQWRYSEGNDPYVKAGEGYKFYGKPDGKAVIFALPFEPAAEAPDEEYDLWLSTGRVLEHWHTGSMTRRVPELHRAFPEAVLFIHPLDAKARDLRRGDKVKVVSRRGEVISIVETRGRNRPPQGLVYMPFFDAAQLVNKLTLDATDPLSKETDFKKCAVKLEKV</sequence>
<keyword id="KW-0004">4Fe-4S</keyword>
<keyword id="KW-0249">Electron transport</keyword>
<keyword id="KW-0408">Iron</keyword>
<keyword id="KW-0411">Iron-sulfur</keyword>
<keyword id="KW-0479">Metal-binding</keyword>
<keyword id="KW-0500">Molybdenum</keyword>
<keyword id="KW-0534">Nitrate assimilation</keyword>
<keyword id="KW-0560">Oxidoreductase</keyword>
<keyword id="KW-0574">Periplasm</keyword>
<keyword id="KW-0732">Signal</keyword>
<keyword id="KW-0813">Transport</keyword>
<evidence type="ECO:0000255" key="1">
    <source>
        <dbReference type="HAMAP-Rule" id="MF_01630"/>
    </source>
</evidence>
<comment type="function">
    <text evidence="1">Catalytic subunit of the periplasmic nitrate reductase complex NapAB. Receives electrons from NapB and catalyzes the reduction of nitrate to nitrite.</text>
</comment>
<comment type="catalytic activity">
    <reaction evidence="1">
        <text>2 Fe(II)-[cytochrome] + nitrate + 2 H(+) = 2 Fe(III)-[cytochrome] + nitrite + H2O</text>
        <dbReference type="Rhea" id="RHEA:12909"/>
        <dbReference type="Rhea" id="RHEA-COMP:11777"/>
        <dbReference type="Rhea" id="RHEA-COMP:11778"/>
        <dbReference type="ChEBI" id="CHEBI:15377"/>
        <dbReference type="ChEBI" id="CHEBI:15378"/>
        <dbReference type="ChEBI" id="CHEBI:16301"/>
        <dbReference type="ChEBI" id="CHEBI:17632"/>
        <dbReference type="ChEBI" id="CHEBI:29033"/>
        <dbReference type="ChEBI" id="CHEBI:29034"/>
        <dbReference type="EC" id="1.9.6.1"/>
    </reaction>
</comment>
<comment type="cofactor">
    <cofactor evidence="1">
        <name>[4Fe-4S] cluster</name>
        <dbReference type="ChEBI" id="CHEBI:49883"/>
    </cofactor>
    <text evidence="1">Binds 1 [4Fe-4S] cluster.</text>
</comment>
<comment type="cofactor">
    <cofactor evidence="1">
        <name>Mo-bis(molybdopterin guanine dinucleotide)</name>
        <dbReference type="ChEBI" id="CHEBI:60539"/>
    </cofactor>
    <text evidence="1">Binds 1 molybdenum-bis(molybdopterin guanine dinucleotide) (Mo-bis-MGD) cofactor per subunit.</text>
</comment>
<comment type="subunit">
    <text evidence="1">Component of the periplasmic nitrate reductase NapAB complex composed of NapA and NapB.</text>
</comment>
<comment type="subcellular location">
    <subcellularLocation>
        <location evidence="1">Periplasm</location>
    </subcellularLocation>
</comment>
<comment type="PTM">
    <text evidence="1">Predicted to be exported by the Tat system. The position of the signal peptide cleavage has not been experimentally proven.</text>
</comment>
<comment type="similarity">
    <text evidence="1">Belongs to the prokaryotic molybdopterin-containing oxidoreductase family. NasA/NapA/NarB subfamily.</text>
</comment>
<gene>
    <name evidence="1" type="primary">napA</name>
    <name type="ordered locus">EFER_2296</name>
</gene>
<reference key="1">
    <citation type="journal article" date="2009" name="PLoS Genet.">
        <title>Organised genome dynamics in the Escherichia coli species results in highly diverse adaptive paths.</title>
        <authorList>
            <person name="Touchon M."/>
            <person name="Hoede C."/>
            <person name="Tenaillon O."/>
            <person name="Barbe V."/>
            <person name="Baeriswyl S."/>
            <person name="Bidet P."/>
            <person name="Bingen E."/>
            <person name="Bonacorsi S."/>
            <person name="Bouchier C."/>
            <person name="Bouvet O."/>
            <person name="Calteau A."/>
            <person name="Chiapello H."/>
            <person name="Clermont O."/>
            <person name="Cruveiller S."/>
            <person name="Danchin A."/>
            <person name="Diard M."/>
            <person name="Dossat C."/>
            <person name="Karoui M.E."/>
            <person name="Frapy E."/>
            <person name="Garry L."/>
            <person name="Ghigo J.M."/>
            <person name="Gilles A.M."/>
            <person name="Johnson J."/>
            <person name="Le Bouguenec C."/>
            <person name="Lescat M."/>
            <person name="Mangenot S."/>
            <person name="Martinez-Jehanne V."/>
            <person name="Matic I."/>
            <person name="Nassif X."/>
            <person name="Oztas S."/>
            <person name="Petit M.A."/>
            <person name="Pichon C."/>
            <person name="Rouy Z."/>
            <person name="Ruf C.S."/>
            <person name="Schneider D."/>
            <person name="Tourret J."/>
            <person name="Vacherie B."/>
            <person name="Vallenet D."/>
            <person name="Medigue C."/>
            <person name="Rocha E.P.C."/>
            <person name="Denamur E."/>
        </authorList>
    </citation>
    <scope>NUCLEOTIDE SEQUENCE [LARGE SCALE GENOMIC DNA]</scope>
    <source>
        <strain>ATCC 35469 / DSM 13698 / BCRC 15582 / CCUG 18766 / IAM 14443 / JCM 21226 / LMG 7866 / NBRC 102419 / NCTC 12128 / CDC 0568-73</strain>
    </source>
</reference>
<name>NAPA_ESCF3</name>
<dbReference type="EC" id="1.9.6.1" evidence="1"/>
<dbReference type="EMBL" id="CU928158">
    <property type="protein sequence ID" value="CAQ89797.1"/>
    <property type="molecule type" value="Genomic_DNA"/>
</dbReference>
<dbReference type="RefSeq" id="WP_000778067.1">
    <property type="nucleotide sequence ID" value="NC_011740.1"/>
</dbReference>
<dbReference type="SMR" id="B7LJU7"/>
<dbReference type="GeneID" id="93774972"/>
<dbReference type="KEGG" id="efe:EFER_2296"/>
<dbReference type="HOGENOM" id="CLU_000422_13_4_6"/>
<dbReference type="OrthoDB" id="9816402at2"/>
<dbReference type="Proteomes" id="UP000000745">
    <property type="component" value="Chromosome"/>
</dbReference>
<dbReference type="GO" id="GO:0016020">
    <property type="term" value="C:membrane"/>
    <property type="evidence" value="ECO:0007669"/>
    <property type="project" value="TreeGrafter"/>
</dbReference>
<dbReference type="GO" id="GO:0009325">
    <property type="term" value="C:nitrate reductase complex"/>
    <property type="evidence" value="ECO:0007669"/>
    <property type="project" value="TreeGrafter"/>
</dbReference>
<dbReference type="GO" id="GO:0042597">
    <property type="term" value="C:periplasmic space"/>
    <property type="evidence" value="ECO:0007669"/>
    <property type="project" value="UniProtKB-SubCell"/>
</dbReference>
<dbReference type="GO" id="GO:0051539">
    <property type="term" value="F:4 iron, 4 sulfur cluster binding"/>
    <property type="evidence" value="ECO:0007669"/>
    <property type="project" value="UniProtKB-KW"/>
</dbReference>
<dbReference type="GO" id="GO:0009055">
    <property type="term" value="F:electron transfer activity"/>
    <property type="evidence" value="ECO:0007669"/>
    <property type="project" value="UniProtKB-UniRule"/>
</dbReference>
<dbReference type="GO" id="GO:0005506">
    <property type="term" value="F:iron ion binding"/>
    <property type="evidence" value="ECO:0007669"/>
    <property type="project" value="UniProtKB-UniRule"/>
</dbReference>
<dbReference type="GO" id="GO:0030151">
    <property type="term" value="F:molybdenum ion binding"/>
    <property type="evidence" value="ECO:0007669"/>
    <property type="project" value="InterPro"/>
</dbReference>
<dbReference type="GO" id="GO:0043546">
    <property type="term" value="F:molybdopterin cofactor binding"/>
    <property type="evidence" value="ECO:0007669"/>
    <property type="project" value="InterPro"/>
</dbReference>
<dbReference type="GO" id="GO:0050140">
    <property type="term" value="F:nitrate reductase (cytochrome) activity"/>
    <property type="evidence" value="ECO:0007669"/>
    <property type="project" value="UniProtKB-EC"/>
</dbReference>
<dbReference type="GO" id="GO:0045333">
    <property type="term" value="P:cellular respiration"/>
    <property type="evidence" value="ECO:0007669"/>
    <property type="project" value="UniProtKB-ARBA"/>
</dbReference>
<dbReference type="GO" id="GO:0006777">
    <property type="term" value="P:Mo-molybdopterin cofactor biosynthetic process"/>
    <property type="evidence" value="ECO:0007669"/>
    <property type="project" value="UniProtKB-UniRule"/>
</dbReference>
<dbReference type="GO" id="GO:0042128">
    <property type="term" value="P:nitrate assimilation"/>
    <property type="evidence" value="ECO:0007669"/>
    <property type="project" value="UniProtKB-UniRule"/>
</dbReference>
<dbReference type="CDD" id="cd02791">
    <property type="entry name" value="MopB_CT_Nitrate-R-NapA-like"/>
    <property type="match status" value="1"/>
</dbReference>
<dbReference type="CDD" id="cd02754">
    <property type="entry name" value="MopB_Nitrate-R-NapA-like"/>
    <property type="match status" value="1"/>
</dbReference>
<dbReference type="FunFam" id="2.40.40.20:FF:000005">
    <property type="entry name" value="Periplasmic nitrate reductase"/>
    <property type="match status" value="1"/>
</dbReference>
<dbReference type="FunFam" id="3.40.228.10:FF:000001">
    <property type="entry name" value="Periplasmic nitrate reductase"/>
    <property type="match status" value="1"/>
</dbReference>
<dbReference type="Gene3D" id="2.40.40.20">
    <property type="match status" value="1"/>
</dbReference>
<dbReference type="Gene3D" id="3.30.200.210">
    <property type="match status" value="1"/>
</dbReference>
<dbReference type="Gene3D" id="3.40.50.740">
    <property type="match status" value="1"/>
</dbReference>
<dbReference type="Gene3D" id="3.40.228.10">
    <property type="entry name" value="Dimethylsulfoxide Reductase, domain 2"/>
    <property type="match status" value="1"/>
</dbReference>
<dbReference type="HAMAP" id="MF_01630">
    <property type="entry name" value="Nitrate_reduct_NapA"/>
    <property type="match status" value="1"/>
</dbReference>
<dbReference type="InterPro" id="IPR009010">
    <property type="entry name" value="Asp_de-COase-like_dom_sf"/>
</dbReference>
<dbReference type="InterPro" id="IPR041957">
    <property type="entry name" value="CT_Nitrate-R-NapA-like"/>
</dbReference>
<dbReference type="InterPro" id="IPR006657">
    <property type="entry name" value="MoPterin_dinucl-bd_dom"/>
</dbReference>
<dbReference type="InterPro" id="IPR006656">
    <property type="entry name" value="Mopterin_OxRdtase"/>
</dbReference>
<dbReference type="InterPro" id="IPR006963">
    <property type="entry name" value="Mopterin_OxRdtase_4Fe-4S_dom"/>
</dbReference>
<dbReference type="InterPro" id="IPR027467">
    <property type="entry name" value="MopterinOxRdtase_cofactor_BS"/>
</dbReference>
<dbReference type="InterPro" id="IPR010051">
    <property type="entry name" value="Periplasm_NO3_reductase_lsu"/>
</dbReference>
<dbReference type="InterPro" id="IPR050123">
    <property type="entry name" value="Prok_molybdopt-oxidoreductase"/>
</dbReference>
<dbReference type="InterPro" id="IPR006311">
    <property type="entry name" value="TAT_signal"/>
</dbReference>
<dbReference type="InterPro" id="IPR019546">
    <property type="entry name" value="TAT_signal_bac_arc"/>
</dbReference>
<dbReference type="NCBIfam" id="TIGR01706">
    <property type="entry name" value="NAPA"/>
    <property type="match status" value="1"/>
</dbReference>
<dbReference type="NCBIfam" id="NF010055">
    <property type="entry name" value="PRK13532.1"/>
    <property type="match status" value="1"/>
</dbReference>
<dbReference type="NCBIfam" id="TIGR01409">
    <property type="entry name" value="TAT_signal_seq"/>
    <property type="match status" value="1"/>
</dbReference>
<dbReference type="PANTHER" id="PTHR43105:SF11">
    <property type="entry name" value="PERIPLASMIC NITRATE REDUCTASE"/>
    <property type="match status" value="1"/>
</dbReference>
<dbReference type="PANTHER" id="PTHR43105">
    <property type="entry name" value="RESPIRATORY NITRATE REDUCTASE"/>
    <property type="match status" value="1"/>
</dbReference>
<dbReference type="Pfam" id="PF04879">
    <property type="entry name" value="Molybdop_Fe4S4"/>
    <property type="match status" value="1"/>
</dbReference>
<dbReference type="Pfam" id="PF00384">
    <property type="entry name" value="Molybdopterin"/>
    <property type="match status" value="1"/>
</dbReference>
<dbReference type="Pfam" id="PF01568">
    <property type="entry name" value="Molydop_binding"/>
    <property type="match status" value="1"/>
</dbReference>
<dbReference type="SMART" id="SM00926">
    <property type="entry name" value="Molybdop_Fe4S4"/>
    <property type="match status" value="1"/>
</dbReference>
<dbReference type="SUPFAM" id="SSF50692">
    <property type="entry name" value="ADC-like"/>
    <property type="match status" value="1"/>
</dbReference>
<dbReference type="SUPFAM" id="SSF53706">
    <property type="entry name" value="Formate dehydrogenase/DMSO reductase, domains 1-3"/>
    <property type="match status" value="1"/>
</dbReference>
<dbReference type="PROSITE" id="PS51669">
    <property type="entry name" value="4FE4S_MOW_BIS_MGD"/>
    <property type="match status" value="1"/>
</dbReference>
<dbReference type="PROSITE" id="PS00551">
    <property type="entry name" value="MOLYBDOPTERIN_PROK_1"/>
    <property type="match status" value="1"/>
</dbReference>
<dbReference type="PROSITE" id="PS51318">
    <property type="entry name" value="TAT"/>
    <property type="match status" value="1"/>
</dbReference>
<proteinExistence type="inferred from homology"/>
<accession>B7LJU7</accession>
<feature type="signal peptide" description="Tat-type signal" evidence="1">
    <location>
        <begin position="1"/>
        <end position="31"/>
    </location>
</feature>
<feature type="chain" id="PRO_1000186364" description="Periplasmic nitrate reductase" evidence="1">
    <location>
        <begin position="32"/>
        <end position="828"/>
    </location>
</feature>
<feature type="domain" description="4Fe-4S Mo/W bis-MGD-type" evidence="1">
    <location>
        <begin position="39"/>
        <end position="95"/>
    </location>
</feature>
<feature type="binding site" evidence="1">
    <location>
        <position position="46"/>
    </location>
    <ligand>
        <name>[4Fe-4S] cluster</name>
        <dbReference type="ChEBI" id="CHEBI:49883"/>
    </ligand>
</feature>
<feature type="binding site" evidence="1">
    <location>
        <position position="49"/>
    </location>
    <ligand>
        <name>[4Fe-4S] cluster</name>
        <dbReference type="ChEBI" id="CHEBI:49883"/>
    </ligand>
</feature>
<feature type="binding site" evidence="1">
    <location>
        <position position="53"/>
    </location>
    <ligand>
        <name>[4Fe-4S] cluster</name>
        <dbReference type="ChEBI" id="CHEBI:49883"/>
    </ligand>
</feature>
<feature type="binding site" evidence="1">
    <location>
        <position position="81"/>
    </location>
    <ligand>
        <name>[4Fe-4S] cluster</name>
        <dbReference type="ChEBI" id="CHEBI:49883"/>
    </ligand>
</feature>
<feature type="binding site" evidence="1">
    <location>
        <position position="83"/>
    </location>
    <ligand>
        <name>Mo-bis(molybdopterin guanine dinucleotide)</name>
        <dbReference type="ChEBI" id="CHEBI:60539"/>
    </ligand>
</feature>
<feature type="binding site" evidence="1">
    <location>
        <position position="150"/>
    </location>
    <ligand>
        <name>Mo-bis(molybdopterin guanine dinucleotide)</name>
        <dbReference type="ChEBI" id="CHEBI:60539"/>
    </ligand>
</feature>
<feature type="binding site" evidence="1">
    <location>
        <position position="175"/>
    </location>
    <ligand>
        <name>Mo-bis(molybdopterin guanine dinucleotide)</name>
        <dbReference type="ChEBI" id="CHEBI:60539"/>
    </ligand>
</feature>
<feature type="binding site" evidence="1">
    <location>
        <position position="179"/>
    </location>
    <ligand>
        <name>Mo-bis(molybdopterin guanine dinucleotide)</name>
        <dbReference type="ChEBI" id="CHEBI:60539"/>
    </ligand>
</feature>
<feature type="binding site" evidence="1">
    <location>
        <begin position="212"/>
        <end position="219"/>
    </location>
    <ligand>
        <name>Mo-bis(molybdopterin guanine dinucleotide)</name>
        <dbReference type="ChEBI" id="CHEBI:60539"/>
    </ligand>
</feature>
<feature type="binding site" evidence="1">
    <location>
        <begin position="243"/>
        <end position="247"/>
    </location>
    <ligand>
        <name>Mo-bis(molybdopterin guanine dinucleotide)</name>
        <dbReference type="ChEBI" id="CHEBI:60539"/>
    </ligand>
</feature>
<feature type="binding site" evidence="1">
    <location>
        <begin position="262"/>
        <end position="264"/>
    </location>
    <ligand>
        <name>Mo-bis(molybdopterin guanine dinucleotide)</name>
        <dbReference type="ChEBI" id="CHEBI:60539"/>
    </ligand>
</feature>
<feature type="binding site" evidence="1">
    <location>
        <position position="372"/>
    </location>
    <ligand>
        <name>Mo-bis(molybdopterin guanine dinucleotide)</name>
        <dbReference type="ChEBI" id="CHEBI:60539"/>
    </ligand>
</feature>
<feature type="binding site" evidence="1">
    <location>
        <position position="376"/>
    </location>
    <ligand>
        <name>Mo-bis(molybdopterin guanine dinucleotide)</name>
        <dbReference type="ChEBI" id="CHEBI:60539"/>
    </ligand>
</feature>
<feature type="binding site" evidence="1">
    <location>
        <position position="482"/>
    </location>
    <ligand>
        <name>Mo-bis(molybdopterin guanine dinucleotide)</name>
        <dbReference type="ChEBI" id="CHEBI:60539"/>
    </ligand>
</feature>
<feature type="binding site" evidence="1">
    <location>
        <begin position="508"/>
        <end position="509"/>
    </location>
    <ligand>
        <name>Mo-bis(molybdopterin guanine dinucleotide)</name>
        <dbReference type="ChEBI" id="CHEBI:60539"/>
    </ligand>
</feature>
<feature type="binding site" evidence="1">
    <location>
        <position position="531"/>
    </location>
    <ligand>
        <name>Mo-bis(molybdopterin guanine dinucleotide)</name>
        <dbReference type="ChEBI" id="CHEBI:60539"/>
    </ligand>
</feature>
<feature type="binding site" evidence="1">
    <location>
        <position position="558"/>
    </location>
    <ligand>
        <name>Mo-bis(molybdopterin guanine dinucleotide)</name>
        <dbReference type="ChEBI" id="CHEBI:60539"/>
    </ligand>
</feature>
<feature type="binding site" evidence="1">
    <location>
        <begin position="718"/>
        <end position="727"/>
    </location>
    <ligand>
        <name>Mo-bis(molybdopterin guanine dinucleotide)</name>
        <dbReference type="ChEBI" id="CHEBI:60539"/>
    </ligand>
</feature>
<feature type="binding site" evidence="1">
    <location>
        <position position="794"/>
    </location>
    <ligand>
        <name>substrate</name>
    </ligand>
</feature>
<feature type="binding site" evidence="1">
    <location>
        <position position="802"/>
    </location>
    <ligand>
        <name>Mo-bis(molybdopterin guanine dinucleotide)</name>
        <dbReference type="ChEBI" id="CHEBI:60539"/>
    </ligand>
</feature>
<feature type="binding site" evidence="1">
    <location>
        <position position="819"/>
    </location>
    <ligand>
        <name>Mo-bis(molybdopterin guanine dinucleotide)</name>
        <dbReference type="ChEBI" id="CHEBI:60539"/>
    </ligand>
</feature>
<organism>
    <name type="scientific">Escherichia fergusonii (strain ATCC 35469 / DSM 13698 / CCUG 18766 / IAM 14443 / JCM 21226 / LMG 7866 / NBRC 102419 / NCTC 12128 / CDC 0568-73)</name>
    <dbReference type="NCBI Taxonomy" id="585054"/>
    <lineage>
        <taxon>Bacteria</taxon>
        <taxon>Pseudomonadati</taxon>
        <taxon>Pseudomonadota</taxon>
        <taxon>Gammaproteobacteria</taxon>
        <taxon>Enterobacterales</taxon>
        <taxon>Enterobacteriaceae</taxon>
        <taxon>Escherichia</taxon>
    </lineage>
</organism>